<accession>P62651</accession>
<accession>D6W3S0</accession>
<gene>
    <name type="primary">ERI1</name>
    <name type="synonym">RIN1</name>
    <name type="ordered locus">YPL096C-A</name>
</gene>
<comment type="function">
    <text evidence="2 3">Probable component of the GPI-GlcNAc transferase (GPI-GnT) complex in the endoplasmic reticulum, a complex that catalyzes transfer of GlcNAc from UDP-GlcNAc to an acceptor phosphatidylinositol, the first step in the production of GPI-anchors for cell surface proteins. Ras may inhibit the enzyme activity of the GPI-GnT complex via the association between ERI1 and RAS2.</text>
</comment>
<comment type="pathway">
    <text evidence="4">Glycolipid biosynthesis; glycosylphosphatidylinositol-anchor biosynthesis.</text>
</comment>
<comment type="subunit">
    <text evidence="2 3 4">Component of the phosphatidylinositol N-acetylglucosaminyltransferase (GPI-GlcNAc transferase) complex composed of at least GPI1, GPI2, GPI3, GPI15, GPI19 and ERI1 (Probable). Interacts with GPI2 (PubMed:15163411). Interacts with GTP-bound RAS2 in an effector loop-dependent manner (PubMed:12832483).</text>
</comment>
<comment type="subcellular location">
    <subcellularLocation>
        <location evidence="2">Endoplasmic reticulum membrane</location>
        <topology evidence="2">Multi-pass membrane protein</topology>
    </subcellularLocation>
</comment>
<comment type="disruption phenotype">
    <text evidence="2">Defects cause hyperactive Ras phenotypes, probably due to diminished GPI-anchor protein production.</text>
</comment>
<evidence type="ECO:0000255" key="1"/>
<evidence type="ECO:0000269" key="2">
    <source>
    </source>
</evidence>
<evidence type="ECO:0000269" key="3">
    <source>
    </source>
</evidence>
<evidence type="ECO:0000305" key="4">
    <source>
    </source>
</evidence>
<proteinExistence type="evidence at protein level"/>
<protein>
    <recommendedName>
        <fullName>Phosphatidylinositol N-acetylglucosaminyltransferase ERI1 subunit</fullName>
        <shortName>GPI-GlcNAc transferase complex subunit ERI1</shortName>
        <shortName>GPI-GnT subunit ERI1</shortName>
    </recommendedName>
    <alternativeName>
        <fullName>Endoplasmic reticulum-associated Ras inhibitor protein 1</fullName>
    </alternativeName>
</protein>
<sequence length="68" mass="8039">MRPRDQGFLVLGFTYSVLLISLATFYWLRNNDSFLHYWCVLLLCPATLWLWALIAWCDSEMFASSKDE</sequence>
<feature type="chain" id="PRO_0000087028" description="Phosphatidylinositol N-acetylglucosaminyltransferase ERI1 subunit">
    <location>
        <begin position="1"/>
        <end position="68"/>
    </location>
</feature>
<feature type="transmembrane region" description="Helical" evidence="1">
    <location>
        <begin position="8"/>
        <end position="28"/>
    </location>
</feature>
<feature type="transmembrane region" description="Helical" evidence="1">
    <location>
        <begin position="34"/>
        <end position="54"/>
    </location>
</feature>
<keyword id="KW-0256">Endoplasmic reticulum</keyword>
<keyword id="KW-0337">GPI-anchor biosynthesis</keyword>
<keyword id="KW-0472">Membrane</keyword>
<keyword id="KW-1185">Reference proteome</keyword>
<keyword id="KW-0812">Transmembrane</keyword>
<keyword id="KW-1133">Transmembrane helix</keyword>
<organism>
    <name type="scientific">Saccharomyces cerevisiae (strain ATCC 204508 / S288c)</name>
    <name type="common">Baker's yeast</name>
    <dbReference type="NCBI Taxonomy" id="559292"/>
    <lineage>
        <taxon>Eukaryota</taxon>
        <taxon>Fungi</taxon>
        <taxon>Dikarya</taxon>
        <taxon>Ascomycota</taxon>
        <taxon>Saccharomycotina</taxon>
        <taxon>Saccharomycetes</taxon>
        <taxon>Saccharomycetales</taxon>
        <taxon>Saccharomycetaceae</taxon>
        <taxon>Saccharomyces</taxon>
    </lineage>
</organism>
<name>ERI1_YEAST</name>
<reference key="1">
    <citation type="journal article" date="1997" name="Nature">
        <title>The nucleotide sequence of Saccharomyces cerevisiae chromosome XVI.</title>
        <authorList>
            <person name="Bussey H."/>
            <person name="Storms R.K."/>
            <person name="Ahmed A."/>
            <person name="Albermann K."/>
            <person name="Allen E."/>
            <person name="Ansorge W."/>
            <person name="Araujo R."/>
            <person name="Aparicio A."/>
            <person name="Barrell B.G."/>
            <person name="Badcock K."/>
            <person name="Benes V."/>
            <person name="Botstein D."/>
            <person name="Bowman S."/>
            <person name="Brueckner M."/>
            <person name="Carpenter J."/>
            <person name="Cherry J.M."/>
            <person name="Chung E."/>
            <person name="Churcher C.M."/>
            <person name="Coster F."/>
            <person name="Davis K."/>
            <person name="Davis R.W."/>
            <person name="Dietrich F.S."/>
            <person name="Delius H."/>
            <person name="DiPaolo T."/>
            <person name="Dubois E."/>
            <person name="Duesterhoeft A."/>
            <person name="Duncan M."/>
            <person name="Floeth M."/>
            <person name="Fortin N."/>
            <person name="Friesen J.D."/>
            <person name="Fritz C."/>
            <person name="Goffeau A."/>
            <person name="Hall J."/>
            <person name="Hebling U."/>
            <person name="Heumann K."/>
            <person name="Hilbert H."/>
            <person name="Hillier L.W."/>
            <person name="Hunicke-Smith S."/>
            <person name="Hyman R.W."/>
            <person name="Johnston M."/>
            <person name="Kalman S."/>
            <person name="Kleine K."/>
            <person name="Komp C."/>
            <person name="Kurdi O."/>
            <person name="Lashkari D."/>
            <person name="Lew H."/>
            <person name="Lin A."/>
            <person name="Lin D."/>
            <person name="Louis E.J."/>
            <person name="Marathe R."/>
            <person name="Messenguy F."/>
            <person name="Mewes H.-W."/>
            <person name="Mirtipati S."/>
            <person name="Moestl D."/>
            <person name="Mueller-Auer S."/>
            <person name="Namath A."/>
            <person name="Nentwich U."/>
            <person name="Oefner P."/>
            <person name="Pearson D."/>
            <person name="Petel F.X."/>
            <person name="Pohl T.M."/>
            <person name="Purnelle B."/>
            <person name="Rajandream M.A."/>
            <person name="Rechmann S."/>
            <person name="Rieger M."/>
            <person name="Riles L."/>
            <person name="Roberts D."/>
            <person name="Schaefer M."/>
            <person name="Scharfe M."/>
            <person name="Scherens B."/>
            <person name="Schramm S."/>
            <person name="Schroeder M."/>
            <person name="Sdicu A.-M."/>
            <person name="Tettelin H."/>
            <person name="Urrestarazu L.A."/>
            <person name="Ushinsky S."/>
            <person name="Vierendeels F."/>
            <person name="Vissers S."/>
            <person name="Voss H."/>
            <person name="Walsh S.V."/>
            <person name="Wambutt R."/>
            <person name="Wang Y."/>
            <person name="Wedler E."/>
            <person name="Wedler H."/>
            <person name="Winnett E."/>
            <person name="Zhong W.-W."/>
            <person name="Zollner A."/>
            <person name="Vo D.H."/>
            <person name="Hani J."/>
        </authorList>
    </citation>
    <scope>NUCLEOTIDE SEQUENCE [LARGE SCALE GENOMIC DNA]</scope>
    <source>
        <strain>ATCC 204508 / S288c</strain>
    </source>
</reference>
<reference key="2">
    <citation type="journal article" date="2014" name="G3 (Bethesda)">
        <title>The reference genome sequence of Saccharomyces cerevisiae: Then and now.</title>
        <authorList>
            <person name="Engel S.R."/>
            <person name="Dietrich F.S."/>
            <person name="Fisk D.G."/>
            <person name="Binkley G."/>
            <person name="Balakrishnan R."/>
            <person name="Costanzo M.C."/>
            <person name="Dwight S.S."/>
            <person name="Hitz B.C."/>
            <person name="Karra K."/>
            <person name="Nash R.S."/>
            <person name="Weng S."/>
            <person name="Wong E.D."/>
            <person name="Lloyd P."/>
            <person name="Skrzypek M.S."/>
            <person name="Miyasato S.R."/>
            <person name="Simison M."/>
            <person name="Cherry J.M."/>
        </authorList>
    </citation>
    <scope>GENOME REANNOTATION</scope>
    <source>
        <strain>ATCC 204508 / S288c</strain>
    </source>
</reference>
<reference key="3">
    <citation type="journal article" date="2003" name="Mol. Cell. Biol.">
        <title>A novel Ras inhibitor, Eri1, engages yeast Ras at the endoplasmic reticulum.</title>
        <authorList>
            <person name="Sobering A.K."/>
            <person name="Romeo M.J."/>
            <person name="Vay H.A."/>
            <person name="Levin D.E."/>
        </authorList>
    </citation>
    <scope>FUNCTION</scope>
    <scope>SUBCELLULAR LOCATION</scope>
    <scope>INTERACTION WITH RAS2</scope>
    <scope>DISRUPTION PHENOTYPE</scope>
</reference>
<reference key="4">
    <citation type="journal article" date="2004" name="Cell">
        <title>Yeast Ras regulates the complex that catalyzes the first step in GPI-anchor biosynthesis at the ER.</title>
        <authorList>
            <person name="Sobering A.K."/>
            <person name="Watanabe R."/>
            <person name="Romeo M.J."/>
            <person name="Yan B.C."/>
            <person name="Specht C.A."/>
            <person name="Orlean P."/>
            <person name="Riezman H."/>
            <person name="Levin D.E."/>
        </authorList>
    </citation>
    <scope>FUNCTION</scope>
    <scope>INTERACTION WITH GPI2</scope>
</reference>
<dbReference type="EMBL" id="U43281">
    <property type="status" value="NOT_ANNOTATED_CDS"/>
    <property type="molecule type" value="Genomic_DNA"/>
</dbReference>
<dbReference type="EMBL" id="BK006949">
    <property type="protein sequence ID" value="DAA11336.1"/>
    <property type="molecule type" value="Genomic_DNA"/>
</dbReference>
<dbReference type="RefSeq" id="NP_690846.1">
    <property type="nucleotide sequence ID" value="NM_001184515.1"/>
</dbReference>
<dbReference type="BioGRID" id="36084">
    <property type="interactions" value="185"/>
</dbReference>
<dbReference type="ComplexPortal" id="CPX-1274">
    <property type="entry name" value="Glycosylphosphatidylinositol-N-acetylglucosaminyltransferase complex"/>
</dbReference>
<dbReference type="FunCoup" id="P62651">
    <property type="interactions" value="28"/>
</dbReference>
<dbReference type="IntAct" id="P62651">
    <property type="interactions" value="1"/>
</dbReference>
<dbReference type="STRING" id="4932.YPL096C-A"/>
<dbReference type="PaxDb" id="4932-YPL096C-A"/>
<dbReference type="EnsemblFungi" id="YPL096C-A_mRNA">
    <property type="protein sequence ID" value="YPL096C-A"/>
    <property type="gene ID" value="YPL096C-A"/>
</dbReference>
<dbReference type="GeneID" id="856008"/>
<dbReference type="KEGG" id="sce:YPL096C-A"/>
<dbReference type="AGR" id="SGD:S000028423"/>
<dbReference type="SGD" id="S000028423">
    <property type="gene designation" value="ERI1"/>
</dbReference>
<dbReference type="VEuPathDB" id="FungiDB:YPL096C-A"/>
<dbReference type="eggNOG" id="ENOG502SXJV">
    <property type="taxonomic scope" value="Eukaryota"/>
</dbReference>
<dbReference type="HOGENOM" id="CLU_190860_0_0_1"/>
<dbReference type="InParanoid" id="P62651"/>
<dbReference type="OMA" id="WALIAWC"/>
<dbReference type="OrthoDB" id="4036917at2759"/>
<dbReference type="BioCyc" id="YEAST:G3O-34360-MONOMER"/>
<dbReference type="UniPathway" id="UPA00196"/>
<dbReference type="BioGRID-ORCS" id="856008">
    <property type="hits" value="0 hits in 10 CRISPR screens"/>
</dbReference>
<dbReference type="PRO" id="PR:P62651"/>
<dbReference type="Proteomes" id="UP000002311">
    <property type="component" value="Chromosome XVI"/>
</dbReference>
<dbReference type="RNAct" id="P62651">
    <property type="molecule type" value="protein"/>
</dbReference>
<dbReference type="GO" id="GO:0005783">
    <property type="term" value="C:endoplasmic reticulum"/>
    <property type="evidence" value="ECO:0007005"/>
    <property type="project" value="SGD"/>
</dbReference>
<dbReference type="GO" id="GO:0005789">
    <property type="term" value="C:endoplasmic reticulum membrane"/>
    <property type="evidence" value="ECO:0000314"/>
    <property type="project" value="SGD"/>
</dbReference>
<dbReference type="GO" id="GO:0000506">
    <property type="term" value="C:glycosylphosphatidylinositol-N-acetylglucosaminyltransferase (GPI-GnT) complex"/>
    <property type="evidence" value="ECO:0000353"/>
    <property type="project" value="SGD"/>
</dbReference>
<dbReference type="GO" id="GO:0005095">
    <property type="term" value="F:GTPase inhibitor activity"/>
    <property type="evidence" value="ECO:0000314"/>
    <property type="project" value="SGD"/>
</dbReference>
<dbReference type="GO" id="GO:0031505">
    <property type="term" value="P:fungal-type cell wall organization"/>
    <property type="evidence" value="ECO:0000303"/>
    <property type="project" value="ComplexPortal"/>
</dbReference>
<dbReference type="GO" id="GO:0006506">
    <property type="term" value="P:GPI anchor biosynthetic process"/>
    <property type="evidence" value="ECO:0000315"/>
    <property type="project" value="SGD"/>
</dbReference>
<dbReference type="GO" id="GO:0007265">
    <property type="term" value="P:Ras protein signal transduction"/>
    <property type="evidence" value="ECO:0000315"/>
    <property type="project" value="SGD"/>
</dbReference>